<feature type="chain" id="PRO_0000096948" description="Nodulation protein NolU">
    <location>
        <begin position="1"/>
        <end position="212"/>
    </location>
</feature>
<organism>
    <name type="scientific">Sinorhizobium fredii (strain NBRC 101917 / NGR234)</name>
    <dbReference type="NCBI Taxonomy" id="394"/>
    <lineage>
        <taxon>Bacteria</taxon>
        <taxon>Pseudomonadati</taxon>
        <taxon>Pseudomonadota</taxon>
        <taxon>Alphaproteobacteria</taxon>
        <taxon>Hyphomicrobiales</taxon>
        <taxon>Rhizobiaceae</taxon>
        <taxon>Sinorhizobium/Ensifer group</taxon>
        <taxon>Sinorhizobium</taxon>
    </lineage>
</organism>
<dbReference type="EMBL" id="U00090">
    <property type="protein sequence ID" value="AAB91946.1"/>
    <property type="molecule type" value="Genomic_DNA"/>
</dbReference>
<dbReference type="RefSeq" id="NP_444159.1">
    <property type="nucleotide sequence ID" value="NC_000914.2"/>
</dbReference>
<dbReference type="RefSeq" id="WP_010875107.1">
    <property type="nucleotide sequence ID" value="NC_000914.2"/>
</dbReference>
<dbReference type="KEGG" id="rhi:NGR_a00660"/>
<dbReference type="eggNOG" id="ENOG5033R80">
    <property type="taxonomic scope" value="Bacteria"/>
</dbReference>
<dbReference type="HOGENOM" id="CLU_1298924_0_0_5"/>
<dbReference type="OrthoDB" id="8277149at2"/>
<dbReference type="Proteomes" id="UP000001054">
    <property type="component" value="Plasmid pNGR234a"/>
</dbReference>
<protein>
    <recommendedName>
        <fullName>Nodulation protein NolU</fullName>
    </recommendedName>
</protein>
<geneLocation type="plasmid">
    <name>sym pNGR234a</name>
</geneLocation>
<reference key="1">
    <citation type="journal article" date="1997" name="Nature">
        <title>Molecular basis of symbiosis between Rhizobium and legumes.</title>
        <authorList>
            <person name="Freiberg C.A."/>
            <person name="Fellay R."/>
            <person name="Bairoch A."/>
            <person name="Broughton W.J."/>
            <person name="Rosenthal A."/>
            <person name="Perret X."/>
        </authorList>
    </citation>
    <scope>NUCLEOTIDE SEQUENCE [LARGE SCALE GENOMIC DNA]</scope>
    <source>
        <strain>NBRC 101917 / NGR234</strain>
    </source>
</reference>
<reference key="2">
    <citation type="journal article" date="2009" name="Appl. Environ. Microbiol.">
        <title>Rhizobium sp. strain NGR234 possesses a remarkable number of secretion systems.</title>
        <authorList>
            <person name="Schmeisser C."/>
            <person name="Liesegang H."/>
            <person name="Krysciak D."/>
            <person name="Bakkou N."/>
            <person name="Le Quere A."/>
            <person name="Wollherr A."/>
            <person name="Heinemeyer I."/>
            <person name="Morgenstern B."/>
            <person name="Pommerening-Roeser A."/>
            <person name="Flores M."/>
            <person name="Palacios R."/>
            <person name="Brenner S."/>
            <person name="Gottschalk G."/>
            <person name="Schmitz R.A."/>
            <person name="Broughton W.J."/>
            <person name="Perret X."/>
            <person name="Strittmatter A.W."/>
            <person name="Streit W.R."/>
        </authorList>
    </citation>
    <scope>NUCLEOTIDE SEQUENCE [LARGE SCALE GENOMIC DNA]</scope>
    <source>
        <strain>NBRC 101917 / NGR234</strain>
    </source>
</reference>
<accession>P55715</accession>
<proteinExistence type="predicted"/>
<sequence>MKLPMPIAIQTTQPDVSFQSHSVSRSELAASTHPTRLAARLDPELSAATVVQLQKCARLQPRLAELLLGNDMDWNRIGWGPDLLRGHDPRRAALLAGSIWHARSLLKVVSQRDLARLVERIGADAHAFGIRHLAHAIADKLISDPEKLALQIEHDGHACLGAWLNIRPALERNRVLLRLPLGTAAENPAPEHDGASSGLFSLVIAHFEMESP</sequence>
<keyword id="KW-0536">Nodulation</keyword>
<keyword id="KW-0614">Plasmid</keyword>
<keyword id="KW-1185">Reference proteome</keyword>
<name>NOLU_SINFN</name>
<gene>
    <name type="primary">nolU</name>
    <name type="ordered locus">NGR_a00660</name>
    <name type="ORF">y4yG</name>
</gene>